<comment type="function">
    <text evidence="1">Involved in the first step of pre-mRNA splicing. Required for cell growth and cell cycle control. Plays a role in the levels of the U1, U4, U5 and U6 snRNAs and the maintenance of the U4/U6 snRNA complex. May provide the link between the 'nineteen complex' NTC spliceosome protein complex and the spliceosome through the U6 snRNA. Associates predominantly with U6 snRNAs in assembled active spliceosomes. Binds directly to the internal stem-loop (ISL) domain of the U6 snRNA and to the pre-mRNA intron near the 5' splice site during the activation and catalytic phases of the spliceosome cycle (By similarity).</text>
</comment>
<comment type="subunit">
    <text evidence="1">Associated with the spliceosome.</text>
</comment>
<comment type="subcellular location">
    <subcellularLocation>
        <location evidence="1">Nucleus</location>
    </subcellularLocation>
</comment>
<comment type="domain">
    <text evidence="1">The C-terminal RRM domain and the zinc finger motif are necessary for RNA-binding.</text>
</comment>
<comment type="similarity">
    <text evidence="5">Belongs to the RRM CWC2 family.</text>
</comment>
<proteinExistence type="inferred from homology"/>
<accession>Q59W50</accession>
<accession>A0A1D8PF37</accession>
<organism>
    <name type="scientific">Candida albicans (strain SC5314 / ATCC MYA-2876)</name>
    <name type="common">Yeast</name>
    <dbReference type="NCBI Taxonomy" id="237561"/>
    <lineage>
        <taxon>Eukaryota</taxon>
        <taxon>Fungi</taxon>
        <taxon>Dikarya</taxon>
        <taxon>Ascomycota</taxon>
        <taxon>Saccharomycotina</taxon>
        <taxon>Pichiomycetes</taxon>
        <taxon>Debaryomycetaceae</taxon>
        <taxon>Candida/Lodderomyces clade</taxon>
        <taxon>Candida</taxon>
    </lineage>
</organism>
<dbReference type="EMBL" id="CP017623">
    <property type="protein sequence ID" value="AOW26753.1"/>
    <property type="molecule type" value="Genomic_DNA"/>
</dbReference>
<dbReference type="RefSeq" id="XP_713807.1">
    <property type="nucleotide sequence ID" value="XM_708714.1"/>
</dbReference>
<dbReference type="SMR" id="Q59W50"/>
<dbReference type="FunCoup" id="Q59W50">
    <property type="interactions" value="217"/>
</dbReference>
<dbReference type="STRING" id="237561.Q59W50"/>
<dbReference type="EnsemblFungi" id="C1_11280W_A-T">
    <property type="protein sequence ID" value="C1_11280W_A-T-p1"/>
    <property type="gene ID" value="C1_11280W_A"/>
</dbReference>
<dbReference type="GeneID" id="3644554"/>
<dbReference type="KEGG" id="cal:CAALFM_C111280WA"/>
<dbReference type="CGD" id="CAL0000184865">
    <property type="gene designation" value="orf19.8291"/>
</dbReference>
<dbReference type="VEuPathDB" id="FungiDB:C1_11280W_A"/>
<dbReference type="eggNOG" id="KOG0118">
    <property type="taxonomic scope" value="Eukaryota"/>
</dbReference>
<dbReference type="HOGENOM" id="CLU_043308_0_1_1"/>
<dbReference type="InParanoid" id="Q59W50"/>
<dbReference type="OMA" id="WYNKWSQ"/>
<dbReference type="OrthoDB" id="10251848at2759"/>
<dbReference type="PRO" id="PR:Q59W50"/>
<dbReference type="Proteomes" id="UP000000559">
    <property type="component" value="Chromosome 1"/>
</dbReference>
<dbReference type="GO" id="GO:0071014">
    <property type="term" value="C:post-mRNA release spliceosomal complex"/>
    <property type="evidence" value="ECO:0007669"/>
    <property type="project" value="EnsemblFungi"/>
</dbReference>
<dbReference type="GO" id="GO:0000974">
    <property type="term" value="C:Prp19 complex"/>
    <property type="evidence" value="ECO:0000250"/>
    <property type="project" value="UniProtKB"/>
</dbReference>
<dbReference type="GO" id="GO:0071006">
    <property type="term" value="C:U2-type catalytic step 1 spliceosome"/>
    <property type="evidence" value="ECO:0000318"/>
    <property type="project" value="GO_Central"/>
</dbReference>
<dbReference type="GO" id="GO:0071007">
    <property type="term" value="C:U2-type catalytic step 2 spliceosome"/>
    <property type="evidence" value="ECO:0000318"/>
    <property type="project" value="GO_Central"/>
</dbReference>
<dbReference type="GO" id="GO:0036002">
    <property type="term" value="F:pre-mRNA binding"/>
    <property type="evidence" value="ECO:0000250"/>
    <property type="project" value="UniProtKB"/>
</dbReference>
<dbReference type="GO" id="GO:0017070">
    <property type="term" value="F:U6 snRNA binding"/>
    <property type="evidence" value="ECO:0000250"/>
    <property type="project" value="UniProtKB"/>
</dbReference>
<dbReference type="GO" id="GO:0008270">
    <property type="term" value="F:zinc ion binding"/>
    <property type="evidence" value="ECO:0007669"/>
    <property type="project" value="UniProtKB-KW"/>
</dbReference>
<dbReference type="GO" id="GO:0045292">
    <property type="term" value="P:mRNA cis splicing, via spliceosome"/>
    <property type="evidence" value="ECO:0000250"/>
    <property type="project" value="UniProtKB"/>
</dbReference>
<dbReference type="GO" id="GO:0045787">
    <property type="term" value="P:positive regulation of cell cycle"/>
    <property type="evidence" value="ECO:0000250"/>
    <property type="project" value="UniProtKB"/>
</dbReference>
<dbReference type="GO" id="GO:0033120">
    <property type="term" value="P:positive regulation of RNA splicing"/>
    <property type="evidence" value="ECO:0000250"/>
    <property type="project" value="UniProtKB"/>
</dbReference>
<dbReference type="GO" id="GO:0000387">
    <property type="term" value="P:spliceosomal snRNP assembly"/>
    <property type="evidence" value="ECO:0000250"/>
    <property type="project" value="UniProtKB"/>
</dbReference>
<dbReference type="CDD" id="cd12360">
    <property type="entry name" value="RRM_cwf2"/>
    <property type="match status" value="1"/>
</dbReference>
<dbReference type="Gene3D" id="3.30.70.330">
    <property type="match status" value="1"/>
</dbReference>
<dbReference type="InterPro" id="IPR039171">
    <property type="entry name" value="Cwc2/Slt11"/>
</dbReference>
<dbReference type="InterPro" id="IPR034181">
    <property type="entry name" value="Cwc2_RRM"/>
</dbReference>
<dbReference type="InterPro" id="IPR012677">
    <property type="entry name" value="Nucleotide-bd_a/b_plait_sf"/>
</dbReference>
<dbReference type="InterPro" id="IPR035979">
    <property type="entry name" value="RBD_domain_sf"/>
</dbReference>
<dbReference type="InterPro" id="IPR000504">
    <property type="entry name" value="RRM_dom"/>
</dbReference>
<dbReference type="InterPro" id="IPR032297">
    <property type="entry name" value="Torus"/>
</dbReference>
<dbReference type="InterPro" id="IPR000571">
    <property type="entry name" value="Znf_CCCH"/>
</dbReference>
<dbReference type="InterPro" id="IPR036855">
    <property type="entry name" value="Znf_CCCH_sf"/>
</dbReference>
<dbReference type="PANTHER" id="PTHR14089:SF2">
    <property type="entry name" value="PRE-MRNA-SPLICING FACTOR CWC2"/>
    <property type="match status" value="1"/>
</dbReference>
<dbReference type="PANTHER" id="PTHR14089">
    <property type="entry name" value="PRE-MRNA-SPLICING FACTOR RBM22"/>
    <property type="match status" value="1"/>
</dbReference>
<dbReference type="Pfam" id="PF00076">
    <property type="entry name" value="RRM_1"/>
    <property type="match status" value="1"/>
</dbReference>
<dbReference type="Pfam" id="PF16131">
    <property type="entry name" value="Torus"/>
    <property type="match status" value="1"/>
</dbReference>
<dbReference type="SMART" id="SM00360">
    <property type="entry name" value="RRM"/>
    <property type="match status" value="1"/>
</dbReference>
<dbReference type="SUPFAM" id="SSF90229">
    <property type="entry name" value="CCCH zinc finger"/>
    <property type="match status" value="1"/>
</dbReference>
<dbReference type="SUPFAM" id="SSF54928">
    <property type="entry name" value="RNA-binding domain, RBD"/>
    <property type="match status" value="1"/>
</dbReference>
<dbReference type="PROSITE" id="PS50102">
    <property type="entry name" value="RRM"/>
    <property type="match status" value="1"/>
</dbReference>
<dbReference type="PROSITE" id="PS50103">
    <property type="entry name" value="ZF_C3H1"/>
    <property type="match status" value="1"/>
</dbReference>
<protein>
    <recommendedName>
        <fullName>Pre-mRNA-splicing factor CWC2</fullName>
    </recommendedName>
</protein>
<evidence type="ECO:0000250" key="1"/>
<evidence type="ECO:0000255" key="2">
    <source>
        <dbReference type="PROSITE-ProRule" id="PRU00176"/>
    </source>
</evidence>
<evidence type="ECO:0000255" key="3">
    <source>
        <dbReference type="PROSITE-ProRule" id="PRU00723"/>
    </source>
</evidence>
<evidence type="ECO:0000256" key="4">
    <source>
        <dbReference type="SAM" id="MobiDB-lite"/>
    </source>
</evidence>
<evidence type="ECO:0000305" key="5"/>
<reference key="1">
    <citation type="journal article" date="2004" name="Proc. Natl. Acad. Sci. U.S.A.">
        <title>The diploid genome sequence of Candida albicans.</title>
        <authorList>
            <person name="Jones T."/>
            <person name="Federspiel N.A."/>
            <person name="Chibana H."/>
            <person name="Dungan J."/>
            <person name="Kalman S."/>
            <person name="Magee B.B."/>
            <person name="Newport G."/>
            <person name="Thorstenson Y.R."/>
            <person name="Agabian N."/>
            <person name="Magee P.T."/>
            <person name="Davis R.W."/>
            <person name="Scherer S."/>
        </authorList>
    </citation>
    <scope>NUCLEOTIDE SEQUENCE [LARGE SCALE GENOMIC DNA]</scope>
    <source>
        <strain>SC5314 / ATCC MYA-2876</strain>
    </source>
</reference>
<reference key="2">
    <citation type="journal article" date="2007" name="Genome Biol.">
        <title>Assembly of the Candida albicans genome into sixteen supercontigs aligned on the eight chromosomes.</title>
        <authorList>
            <person name="van het Hoog M."/>
            <person name="Rast T.J."/>
            <person name="Martchenko M."/>
            <person name="Grindle S."/>
            <person name="Dignard D."/>
            <person name="Hogues H."/>
            <person name="Cuomo C."/>
            <person name="Berriman M."/>
            <person name="Scherer S."/>
            <person name="Magee B.B."/>
            <person name="Whiteway M."/>
            <person name="Chibana H."/>
            <person name="Nantel A."/>
            <person name="Magee P.T."/>
        </authorList>
    </citation>
    <scope>GENOME REANNOTATION</scope>
    <source>
        <strain>SC5314 / ATCC MYA-2876</strain>
    </source>
</reference>
<reference key="3">
    <citation type="journal article" date="2013" name="Genome Biol.">
        <title>Assembly of a phased diploid Candida albicans genome facilitates allele-specific measurements and provides a simple model for repeat and indel structure.</title>
        <authorList>
            <person name="Muzzey D."/>
            <person name="Schwartz K."/>
            <person name="Weissman J.S."/>
            <person name="Sherlock G."/>
        </authorList>
    </citation>
    <scope>NUCLEOTIDE SEQUENCE [LARGE SCALE GENOMIC DNA]</scope>
    <scope>GENOME REANNOTATION</scope>
    <source>
        <strain>SC5314 / ATCC MYA-2876</strain>
    </source>
</reference>
<sequence>MSRKVSISSLTLSEPMTKPARVQVNPEDIDDLDKTQQVNNHQYNIWYSKSLSDANNKSTTKSKYRVRISTDQGFTKANKNTHICLFFSRGCCYLGSKCQYFHRLPKESDNFKPTQDCFGRDKTANYRDDMDGVGSLNKVNCTLYVGGIHIKPNTEQLLVKNFQEFGTVEKVRVLQGKGCAFVTMKTENQAQFAKEAMQSQSLVEGSNEVLYVRWANEDKNPAAQKQEKKRQQELAYDTVKQLLEQESNKKPRLENGAVNRIETINIDDESEDEGAVEDDEADDDIEETRVNSLSAGVKKNVSTHQANGTPESSSTSDENDHNTILRNSLLKDISRLKKKMVYKREEPYLTNLLVDYSSDEDDD</sequence>
<name>CWC2_CANAL</name>
<gene>
    <name type="primary">CWC2</name>
    <name type="ordered locus">CAALFM_C111280WA</name>
    <name type="ORF">CaO19.674</name>
    <name type="ORF">CaO19.8291</name>
</gene>
<keyword id="KW-0131">Cell cycle</keyword>
<keyword id="KW-0479">Metal-binding</keyword>
<keyword id="KW-0507">mRNA processing</keyword>
<keyword id="KW-0508">mRNA splicing</keyword>
<keyword id="KW-0539">Nucleus</keyword>
<keyword id="KW-1185">Reference proteome</keyword>
<keyword id="KW-0694">RNA-binding</keyword>
<keyword id="KW-0747">Spliceosome</keyword>
<keyword id="KW-0862">Zinc</keyword>
<keyword id="KW-0863">Zinc-finger</keyword>
<feature type="chain" id="PRO_0000081541" description="Pre-mRNA-splicing factor CWC2">
    <location>
        <begin position="1"/>
        <end position="363"/>
    </location>
</feature>
<feature type="domain" description="RRM" evidence="2">
    <location>
        <begin position="141"/>
        <end position="217"/>
    </location>
</feature>
<feature type="zinc finger region" description="C3H1-type" evidence="3">
    <location>
        <begin position="78"/>
        <end position="105"/>
    </location>
</feature>
<feature type="region of interest" description="Disordered" evidence="4">
    <location>
        <begin position="246"/>
        <end position="325"/>
    </location>
</feature>
<feature type="compositionally biased region" description="Acidic residues" evidence="4">
    <location>
        <begin position="265"/>
        <end position="286"/>
    </location>
</feature>
<feature type="compositionally biased region" description="Polar residues" evidence="4">
    <location>
        <begin position="290"/>
        <end position="317"/>
    </location>
</feature>